<evidence type="ECO:0000255" key="1">
    <source>
        <dbReference type="HAMAP-Rule" id="MF_00113"/>
    </source>
</evidence>
<reference key="1">
    <citation type="journal article" date="2006" name="Proc. Natl. Acad. Sci. U.S.A.">
        <title>The complete genome sequence of a chronic atrophic gastritis Helicobacter pylori strain: evolution during disease progression.</title>
        <authorList>
            <person name="Oh J.D."/>
            <person name="Kling-Baeckhed H."/>
            <person name="Giannakis M."/>
            <person name="Xu J."/>
            <person name="Fulton R.S."/>
            <person name="Fulton L.A."/>
            <person name="Cordum H.S."/>
            <person name="Wang C."/>
            <person name="Elliott G."/>
            <person name="Edwards J."/>
            <person name="Mardis E.R."/>
            <person name="Engstrand L.G."/>
            <person name="Gordon J.I."/>
        </authorList>
    </citation>
    <scope>NUCLEOTIDE SEQUENCE [LARGE SCALE GENOMIC DNA]</scope>
    <source>
        <strain>HPAG1</strain>
    </source>
</reference>
<keyword id="KW-0963">Cytoplasm</keyword>
<keyword id="KW-0671">Queuosine biosynthesis</keyword>
<keyword id="KW-0949">S-adenosyl-L-methionine</keyword>
<keyword id="KW-0808">Transferase</keyword>
<proteinExistence type="inferred from homology"/>
<name>QUEA_HELPH</name>
<protein>
    <recommendedName>
        <fullName evidence="1">S-adenosylmethionine:tRNA ribosyltransferase-isomerase</fullName>
        <ecNumber evidence="1">2.4.99.17</ecNumber>
    </recommendedName>
    <alternativeName>
        <fullName evidence="1">Queuosine biosynthesis protein QueA</fullName>
    </alternativeName>
</protein>
<comment type="function">
    <text evidence="1">Transfers and isomerizes the ribose moiety from AdoMet to the 7-aminomethyl group of 7-deazaguanine (preQ1-tRNA) to give epoxyqueuosine (oQ-tRNA).</text>
</comment>
<comment type="catalytic activity">
    <reaction evidence="1">
        <text>7-aminomethyl-7-carbaguanosine(34) in tRNA + S-adenosyl-L-methionine = epoxyqueuosine(34) in tRNA + adenine + L-methionine + 2 H(+)</text>
        <dbReference type="Rhea" id="RHEA:32155"/>
        <dbReference type="Rhea" id="RHEA-COMP:10342"/>
        <dbReference type="Rhea" id="RHEA-COMP:18582"/>
        <dbReference type="ChEBI" id="CHEBI:15378"/>
        <dbReference type="ChEBI" id="CHEBI:16708"/>
        <dbReference type="ChEBI" id="CHEBI:57844"/>
        <dbReference type="ChEBI" id="CHEBI:59789"/>
        <dbReference type="ChEBI" id="CHEBI:82833"/>
        <dbReference type="ChEBI" id="CHEBI:194443"/>
        <dbReference type="EC" id="2.4.99.17"/>
    </reaction>
</comment>
<comment type="pathway">
    <text evidence="1">tRNA modification; tRNA-queuosine biosynthesis.</text>
</comment>
<comment type="subunit">
    <text evidence="1">Monomer.</text>
</comment>
<comment type="subcellular location">
    <subcellularLocation>
        <location evidence="1">Cytoplasm</location>
    </subcellularLocation>
</comment>
<comment type="similarity">
    <text evidence="1">Belongs to the QueA family.</text>
</comment>
<gene>
    <name evidence="1" type="primary">queA</name>
    <name type="ordered locus">HPAG1_0385</name>
</gene>
<organism>
    <name type="scientific">Helicobacter pylori (strain HPAG1)</name>
    <dbReference type="NCBI Taxonomy" id="357544"/>
    <lineage>
        <taxon>Bacteria</taxon>
        <taxon>Pseudomonadati</taxon>
        <taxon>Campylobacterota</taxon>
        <taxon>Epsilonproteobacteria</taxon>
        <taxon>Campylobacterales</taxon>
        <taxon>Helicobacteraceae</taxon>
        <taxon>Helicobacter</taxon>
    </lineage>
</organism>
<sequence>MKEFDLESYDYYLPKELIANYPVLPKEKAKLLVYERRSQKITHTTFEHVLDFFPKNALVVLNDTKVMKARLFGSKHALLPSKTTEVFFHRFFKDNTALTQIKGKIKAGDKIFFDANYHAEVLELLHNGQRLIAFYNHKTPLNQENILKLLEQYGHMPLPPYIKRTDESLDAHEYQSVFAKHIGAVAAPTASLHFSQNTLEKLLKDFKHAFLTLHVGAGTFLGVETKDIREHQIHTEILHIPKKSQEILRESQEVLCIGTTALRSVEYFKRLKNSNQESFECDIFLHLANPIQHVNYLLTNFHLPKSSLLMLVSAMIGLEKTKEIYKIAIEKKYRFYSYGDGMLIL</sequence>
<accession>Q1CUC0</accession>
<feature type="chain" id="PRO_1000015223" description="S-adenosylmethionine:tRNA ribosyltransferase-isomerase">
    <location>
        <begin position="1"/>
        <end position="345"/>
    </location>
</feature>
<dbReference type="EC" id="2.4.99.17" evidence="1"/>
<dbReference type="EMBL" id="CP000241">
    <property type="protein sequence ID" value="ABF84452.1"/>
    <property type="molecule type" value="Genomic_DNA"/>
</dbReference>
<dbReference type="RefSeq" id="WP_000657411.1">
    <property type="nucleotide sequence ID" value="NC_008086.1"/>
</dbReference>
<dbReference type="SMR" id="Q1CUC0"/>
<dbReference type="KEGG" id="hpa:HPAG1_0385"/>
<dbReference type="HOGENOM" id="CLU_039110_1_0_7"/>
<dbReference type="UniPathway" id="UPA00392"/>
<dbReference type="GO" id="GO:0005737">
    <property type="term" value="C:cytoplasm"/>
    <property type="evidence" value="ECO:0007669"/>
    <property type="project" value="UniProtKB-SubCell"/>
</dbReference>
<dbReference type="GO" id="GO:0051075">
    <property type="term" value="F:S-adenosylmethionine:tRNA ribosyltransferase-isomerase activity"/>
    <property type="evidence" value="ECO:0007669"/>
    <property type="project" value="UniProtKB-EC"/>
</dbReference>
<dbReference type="GO" id="GO:0008616">
    <property type="term" value="P:queuosine biosynthetic process"/>
    <property type="evidence" value="ECO:0007669"/>
    <property type="project" value="UniProtKB-UniRule"/>
</dbReference>
<dbReference type="GO" id="GO:0002099">
    <property type="term" value="P:tRNA wobble guanine modification"/>
    <property type="evidence" value="ECO:0007669"/>
    <property type="project" value="TreeGrafter"/>
</dbReference>
<dbReference type="Gene3D" id="2.40.10.240">
    <property type="entry name" value="QueA-like"/>
    <property type="match status" value="1"/>
</dbReference>
<dbReference type="Gene3D" id="3.40.1780.10">
    <property type="entry name" value="QueA-like"/>
    <property type="match status" value="1"/>
</dbReference>
<dbReference type="HAMAP" id="MF_00113">
    <property type="entry name" value="QueA"/>
    <property type="match status" value="1"/>
</dbReference>
<dbReference type="InterPro" id="IPR003699">
    <property type="entry name" value="QueA"/>
</dbReference>
<dbReference type="InterPro" id="IPR042118">
    <property type="entry name" value="QueA_dom1"/>
</dbReference>
<dbReference type="InterPro" id="IPR042119">
    <property type="entry name" value="QueA_dom2"/>
</dbReference>
<dbReference type="InterPro" id="IPR036100">
    <property type="entry name" value="QueA_sf"/>
</dbReference>
<dbReference type="NCBIfam" id="NF001140">
    <property type="entry name" value="PRK00147.1"/>
    <property type="match status" value="1"/>
</dbReference>
<dbReference type="NCBIfam" id="TIGR00113">
    <property type="entry name" value="queA"/>
    <property type="match status" value="1"/>
</dbReference>
<dbReference type="PANTHER" id="PTHR30307">
    <property type="entry name" value="S-ADENOSYLMETHIONINE:TRNA RIBOSYLTRANSFERASE-ISOMERASE"/>
    <property type="match status" value="1"/>
</dbReference>
<dbReference type="PANTHER" id="PTHR30307:SF0">
    <property type="entry name" value="S-ADENOSYLMETHIONINE:TRNA RIBOSYLTRANSFERASE-ISOMERASE"/>
    <property type="match status" value="1"/>
</dbReference>
<dbReference type="Pfam" id="PF02547">
    <property type="entry name" value="Queuosine_synth"/>
    <property type="match status" value="1"/>
</dbReference>
<dbReference type="SUPFAM" id="SSF111337">
    <property type="entry name" value="QueA-like"/>
    <property type="match status" value="1"/>
</dbReference>